<comment type="function">
    <text evidence="1">A humoral factor that may play a role in stress tolerance.</text>
</comment>
<comment type="subcellular location">
    <subcellularLocation>
        <location evidence="1">Secreted</location>
    </subcellularLocation>
</comment>
<comment type="similarity">
    <text evidence="2">Belongs to the Turandot family.</text>
</comment>
<dbReference type="EMBL" id="CH954181">
    <property type="protein sequence ID" value="EDV48326.1"/>
    <property type="molecule type" value="Genomic_DNA"/>
</dbReference>
<dbReference type="RefSeq" id="XP_001979368.1">
    <property type="nucleotide sequence ID" value="XM_001979332.2"/>
</dbReference>
<dbReference type="SMR" id="B3P312"/>
<dbReference type="EnsemblMetazoa" id="FBtr0144264">
    <property type="protein sequence ID" value="FBpp0142756"/>
    <property type="gene ID" value="FBgn0116342"/>
</dbReference>
<dbReference type="GeneID" id="6553468"/>
<dbReference type="KEGG" id="der:6553468"/>
<dbReference type="HOGENOM" id="CLU_152780_0_0_1"/>
<dbReference type="OrthoDB" id="7861285at2759"/>
<dbReference type="PhylomeDB" id="B3P312"/>
<dbReference type="Proteomes" id="UP000008711">
    <property type="component" value="Unassembled WGS sequence"/>
</dbReference>
<dbReference type="GO" id="GO:0005615">
    <property type="term" value="C:extracellular space"/>
    <property type="evidence" value="ECO:0000250"/>
    <property type="project" value="UniProtKB"/>
</dbReference>
<dbReference type="GO" id="GO:0034605">
    <property type="term" value="P:cellular response to heat"/>
    <property type="evidence" value="ECO:0007669"/>
    <property type="project" value="UniProtKB-ARBA"/>
</dbReference>
<dbReference type="GO" id="GO:0045087">
    <property type="term" value="P:innate immune response"/>
    <property type="evidence" value="ECO:0007669"/>
    <property type="project" value="UniProtKB-KW"/>
</dbReference>
<dbReference type="GO" id="GO:0009617">
    <property type="term" value="P:response to bacterium"/>
    <property type="evidence" value="ECO:0007669"/>
    <property type="project" value="UniProtKB-ARBA"/>
</dbReference>
<dbReference type="GO" id="GO:0009408">
    <property type="term" value="P:response to heat"/>
    <property type="evidence" value="ECO:0000250"/>
    <property type="project" value="UniProtKB"/>
</dbReference>
<dbReference type="GO" id="GO:0009411">
    <property type="term" value="P:response to UV"/>
    <property type="evidence" value="ECO:0000250"/>
    <property type="project" value="UniProtKB"/>
</dbReference>
<dbReference type="InterPro" id="IPR010825">
    <property type="entry name" value="Turandot"/>
</dbReference>
<dbReference type="Pfam" id="PF07240">
    <property type="entry name" value="Turandot"/>
    <property type="match status" value="1"/>
</dbReference>
<accession>B3P312</accession>
<name>TOTB1_DROER</name>
<keyword id="KW-0391">Immunity</keyword>
<keyword id="KW-0399">Innate immunity</keyword>
<keyword id="KW-0964">Secreted</keyword>
<keyword id="KW-0732">Signal</keyword>
<gene>
    <name type="primary">TotB1</name>
    <name type="ORF">GG24210</name>
</gene>
<feature type="signal peptide" evidence="2">
    <location>
        <begin position="1"/>
        <end position="21"/>
    </location>
</feature>
<feature type="chain" id="PRO_0000354978" description="Protein Turandot B1">
    <location>
        <begin position="22"/>
        <end position="129"/>
    </location>
</feature>
<protein>
    <recommendedName>
        <fullName>Protein Turandot B1</fullName>
    </recommendedName>
</protein>
<reference evidence="3" key="1">
    <citation type="journal article" date="2007" name="Nature">
        <title>Evolution of genes and genomes on the Drosophila phylogeny.</title>
        <authorList>
            <consortium name="Drosophila 12 genomes consortium"/>
        </authorList>
    </citation>
    <scope>NUCLEOTIDE SEQUENCE [LARGE SCALE GENOMIC DNA]</scope>
    <source>
        <strain evidence="3">Tucson 14021-0224.01</strain>
    </source>
</reference>
<organism>
    <name type="scientific">Drosophila erecta</name>
    <name type="common">Fruit fly</name>
    <dbReference type="NCBI Taxonomy" id="7220"/>
    <lineage>
        <taxon>Eukaryota</taxon>
        <taxon>Metazoa</taxon>
        <taxon>Ecdysozoa</taxon>
        <taxon>Arthropoda</taxon>
        <taxon>Hexapoda</taxon>
        <taxon>Insecta</taxon>
        <taxon>Pterygota</taxon>
        <taxon>Neoptera</taxon>
        <taxon>Endopterygota</taxon>
        <taxon>Diptera</taxon>
        <taxon>Brachycera</taxon>
        <taxon>Muscomorpha</taxon>
        <taxon>Ephydroidea</taxon>
        <taxon>Drosophilidae</taxon>
        <taxon>Drosophila</taxon>
        <taxon>Sophophora</taxon>
    </lineage>
</organism>
<sequence>MNSATSLMCFALLLISPLCMGYTAEDREADSRRVAEIIKNSQDDNSKINSIQELLDIYKRLYPSLTPEERESIDNFVNEHTDEVLVDGVPSQGGRKTKFAKKILTEATKGVATGFFEELGSKLAGLFTG</sequence>
<evidence type="ECO:0000250" key="1">
    <source>
        <dbReference type="UniProtKB" id="Q9VDH4"/>
    </source>
</evidence>
<evidence type="ECO:0000255" key="2"/>
<evidence type="ECO:0000312" key="3">
    <source>
        <dbReference type="EMBL" id="EDV48326.1"/>
    </source>
</evidence>
<proteinExistence type="inferred from homology"/>